<name>RL28_SHESR</name>
<feature type="chain" id="PRO_1000007353" description="Large ribosomal subunit protein bL28">
    <location>
        <begin position="1"/>
        <end position="78"/>
    </location>
</feature>
<feature type="region of interest" description="Disordered" evidence="2">
    <location>
        <begin position="1"/>
        <end position="21"/>
    </location>
</feature>
<sequence>MSRVCQVTGKKPMVGNNRSHAKNATRRRFLPNLQNHRFWLEEEKRFVQLRVSTKGIRLIDKKGIEVVVAELRARGEKV</sequence>
<reference key="1">
    <citation type="submission" date="2006-08" db="EMBL/GenBank/DDBJ databases">
        <title>Complete sequence of chromosome 1 of Shewanella sp. MR-7.</title>
        <authorList>
            <person name="Copeland A."/>
            <person name="Lucas S."/>
            <person name="Lapidus A."/>
            <person name="Barry K."/>
            <person name="Detter J.C."/>
            <person name="Glavina del Rio T."/>
            <person name="Hammon N."/>
            <person name="Israni S."/>
            <person name="Dalin E."/>
            <person name="Tice H."/>
            <person name="Pitluck S."/>
            <person name="Kiss H."/>
            <person name="Brettin T."/>
            <person name="Bruce D."/>
            <person name="Han C."/>
            <person name="Tapia R."/>
            <person name="Gilna P."/>
            <person name="Schmutz J."/>
            <person name="Larimer F."/>
            <person name="Land M."/>
            <person name="Hauser L."/>
            <person name="Kyrpides N."/>
            <person name="Mikhailova N."/>
            <person name="Nealson K."/>
            <person name="Konstantinidis K."/>
            <person name="Klappenbach J."/>
            <person name="Tiedje J."/>
            <person name="Richardson P."/>
        </authorList>
    </citation>
    <scope>NUCLEOTIDE SEQUENCE [LARGE SCALE GENOMIC DNA]</scope>
    <source>
        <strain>MR-7</strain>
    </source>
</reference>
<evidence type="ECO:0000255" key="1">
    <source>
        <dbReference type="HAMAP-Rule" id="MF_00373"/>
    </source>
</evidence>
<evidence type="ECO:0000256" key="2">
    <source>
        <dbReference type="SAM" id="MobiDB-lite"/>
    </source>
</evidence>
<evidence type="ECO:0000305" key="3"/>
<proteinExistence type="inferred from homology"/>
<keyword id="KW-0687">Ribonucleoprotein</keyword>
<keyword id="KW-0689">Ribosomal protein</keyword>
<gene>
    <name evidence="1" type="primary">rpmB</name>
    <name type="ordered locus">Shewmr7_0360</name>
</gene>
<organism>
    <name type="scientific">Shewanella sp. (strain MR-7)</name>
    <dbReference type="NCBI Taxonomy" id="60481"/>
    <lineage>
        <taxon>Bacteria</taxon>
        <taxon>Pseudomonadati</taxon>
        <taxon>Pseudomonadota</taxon>
        <taxon>Gammaproteobacteria</taxon>
        <taxon>Alteromonadales</taxon>
        <taxon>Shewanellaceae</taxon>
        <taxon>Shewanella</taxon>
    </lineage>
</organism>
<accession>Q0HZU2</accession>
<comment type="similarity">
    <text evidence="1">Belongs to the bacterial ribosomal protein bL28 family.</text>
</comment>
<dbReference type="EMBL" id="CP000444">
    <property type="protein sequence ID" value="ABI41363.1"/>
    <property type="molecule type" value="Genomic_DNA"/>
</dbReference>
<dbReference type="SMR" id="Q0HZU2"/>
<dbReference type="KEGG" id="shm:Shewmr7_0360"/>
<dbReference type="HOGENOM" id="CLU_064548_3_1_6"/>
<dbReference type="GO" id="GO:0022625">
    <property type="term" value="C:cytosolic large ribosomal subunit"/>
    <property type="evidence" value="ECO:0007669"/>
    <property type="project" value="TreeGrafter"/>
</dbReference>
<dbReference type="GO" id="GO:0003735">
    <property type="term" value="F:structural constituent of ribosome"/>
    <property type="evidence" value="ECO:0007669"/>
    <property type="project" value="InterPro"/>
</dbReference>
<dbReference type="GO" id="GO:0006412">
    <property type="term" value="P:translation"/>
    <property type="evidence" value="ECO:0007669"/>
    <property type="project" value="UniProtKB-UniRule"/>
</dbReference>
<dbReference type="FunFam" id="2.30.170.40:FF:000001">
    <property type="entry name" value="50S ribosomal protein L28"/>
    <property type="match status" value="1"/>
</dbReference>
<dbReference type="Gene3D" id="2.30.170.40">
    <property type="entry name" value="Ribosomal protein L28/L24"/>
    <property type="match status" value="1"/>
</dbReference>
<dbReference type="HAMAP" id="MF_00373">
    <property type="entry name" value="Ribosomal_bL28"/>
    <property type="match status" value="1"/>
</dbReference>
<dbReference type="InterPro" id="IPR026569">
    <property type="entry name" value="Ribosomal_bL28"/>
</dbReference>
<dbReference type="InterPro" id="IPR034704">
    <property type="entry name" value="Ribosomal_bL28/bL31-like_sf"/>
</dbReference>
<dbReference type="InterPro" id="IPR001383">
    <property type="entry name" value="Ribosomal_bL28_bact-type"/>
</dbReference>
<dbReference type="InterPro" id="IPR037147">
    <property type="entry name" value="Ribosomal_bL28_sf"/>
</dbReference>
<dbReference type="NCBIfam" id="TIGR00009">
    <property type="entry name" value="L28"/>
    <property type="match status" value="1"/>
</dbReference>
<dbReference type="PANTHER" id="PTHR13528">
    <property type="entry name" value="39S RIBOSOMAL PROTEIN L28, MITOCHONDRIAL"/>
    <property type="match status" value="1"/>
</dbReference>
<dbReference type="PANTHER" id="PTHR13528:SF2">
    <property type="entry name" value="LARGE RIBOSOMAL SUBUNIT PROTEIN BL28M"/>
    <property type="match status" value="1"/>
</dbReference>
<dbReference type="Pfam" id="PF00830">
    <property type="entry name" value="Ribosomal_L28"/>
    <property type="match status" value="1"/>
</dbReference>
<dbReference type="SUPFAM" id="SSF143800">
    <property type="entry name" value="L28p-like"/>
    <property type="match status" value="1"/>
</dbReference>
<protein>
    <recommendedName>
        <fullName evidence="1">Large ribosomal subunit protein bL28</fullName>
    </recommendedName>
    <alternativeName>
        <fullName evidence="3">50S ribosomal protein L28</fullName>
    </alternativeName>
</protein>